<reference evidence="6" key="1">
    <citation type="journal article" date="2005" name="Genome Res.">
        <title>Comparative genome sequencing of Drosophila pseudoobscura: chromosomal, gene, and cis-element evolution.</title>
        <authorList>
            <person name="Richards S."/>
            <person name="Liu Y."/>
            <person name="Bettencourt B.R."/>
            <person name="Hradecky P."/>
            <person name="Letovsky S."/>
            <person name="Nielsen R."/>
            <person name="Thornton K."/>
            <person name="Hubisz M.J."/>
            <person name="Chen R."/>
            <person name="Meisel R.P."/>
            <person name="Couronne O."/>
            <person name="Hua S."/>
            <person name="Smith M.A."/>
            <person name="Zhang P."/>
            <person name="Liu J."/>
            <person name="Bussemaker H.J."/>
            <person name="van Batenburg M.F."/>
            <person name="Howells S.L."/>
            <person name="Scherer S.E."/>
            <person name="Sodergren E."/>
            <person name="Matthews B.B."/>
            <person name="Crosby M.A."/>
            <person name="Schroeder A.J."/>
            <person name="Ortiz-Barrientos D."/>
            <person name="Rives C.M."/>
            <person name="Metzker M.L."/>
            <person name="Muzny D.M."/>
            <person name="Scott G."/>
            <person name="Steffen D."/>
            <person name="Wheeler D.A."/>
            <person name="Worley K.C."/>
            <person name="Havlak P."/>
            <person name="Durbin K.J."/>
            <person name="Egan A."/>
            <person name="Gill R."/>
            <person name="Hume J."/>
            <person name="Morgan M.B."/>
            <person name="Miner G."/>
            <person name="Hamilton C."/>
            <person name="Huang Y."/>
            <person name="Waldron L."/>
            <person name="Verduzco D."/>
            <person name="Clerc-Blankenburg K.P."/>
            <person name="Dubchak I."/>
            <person name="Noor M.A.F."/>
            <person name="Anderson W."/>
            <person name="White K.P."/>
            <person name="Clark A.G."/>
            <person name="Schaeffer S.W."/>
            <person name="Gelbart W.M."/>
            <person name="Weinstock G.M."/>
            <person name="Gibbs R.A."/>
        </authorList>
    </citation>
    <scope>NUCLEOTIDE SEQUENCE [LARGE SCALE GENOMIC DNA]</scope>
    <source>
        <strain>MV2-25 / Tucson 14011-0121.94</strain>
    </source>
</reference>
<dbReference type="EC" id="3.4.22.61"/>
<dbReference type="EMBL" id="CH379063">
    <property type="protein sequence ID" value="EAL32626.1"/>
    <property type="status" value="ALT_SEQ"/>
    <property type="molecule type" value="Genomic_DNA"/>
</dbReference>
<dbReference type="RefSeq" id="XP_001355567.1">
    <property type="nucleotide sequence ID" value="XM_001355531.2"/>
</dbReference>
<dbReference type="SMR" id="Q29IM7"/>
<dbReference type="FunCoup" id="Q29IM7">
    <property type="interactions" value="337"/>
</dbReference>
<dbReference type="STRING" id="46245.Q29IM7"/>
<dbReference type="MEROPS" id="C14.040"/>
<dbReference type="EnsemblMetazoa" id="FBtr0275081">
    <property type="protein sequence ID" value="FBpp0273519"/>
    <property type="gene ID" value="FBgn0080382"/>
</dbReference>
<dbReference type="GeneID" id="4816060"/>
<dbReference type="KEGG" id="dpo:4816060"/>
<dbReference type="CTD" id="31011"/>
<dbReference type="eggNOG" id="KOG3573">
    <property type="taxonomic scope" value="Eukaryota"/>
</dbReference>
<dbReference type="HOGENOM" id="CLU_036904_4_2_1"/>
<dbReference type="InParanoid" id="Q29IM7"/>
<dbReference type="OMA" id="HGFEGAV"/>
<dbReference type="PhylomeDB" id="Q29IM7"/>
<dbReference type="Proteomes" id="UP000001819">
    <property type="component" value="Chromosome X"/>
</dbReference>
<dbReference type="Bgee" id="FBgn0080382">
    <property type="expression patterns" value="Expressed in female reproductive system and 2 other cell types or tissues"/>
</dbReference>
<dbReference type="ExpressionAtlas" id="Q29IM7">
    <property type="expression patterns" value="baseline"/>
</dbReference>
<dbReference type="GO" id="GO:0005737">
    <property type="term" value="C:cytoplasm"/>
    <property type="evidence" value="ECO:0000250"/>
    <property type="project" value="UniProtKB"/>
</dbReference>
<dbReference type="GO" id="GO:0008656">
    <property type="term" value="F:cysteine-type endopeptidase activator activity involved in apoptotic process"/>
    <property type="evidence" value="ECO:0000250"/>
    <property type="project" value="UniProtKB"/>
</dbReference>
<dbReference type="GO" id="GO:0004197">
    <property type="term" value="F:cysteine-type endopeptidase activity"/>
    <property type="evidence" value="ECO:0007669"/>
    <property type="project" value="InterPro"/>
</dbReference>
<dbReference type="GO" id="GO:0006915">
    <property type="term" value="P:apoptotic process"/>
    <property type="evidence" value="ECO:0000250"/>
    <property type="project" value="UniProtKB"/>
</dbReference>
<dbReference type="GO" id="GO:0050829">
    <property type="term" value="P:defense response to Gram-negative bacterium"/>
    <property type="evidence" value="ECO:0000250"/>
    <property type="project" value="UniProtKB"/>
</dbReference>
<dbReference type="GO" id="GO:0045087">
    <property type="term" value="P:innate immune response"/>
    <property type="evidence" value="ECO:0007669"/>
    <property type="project" value="UniProtKB-KW"/>
</dbReference>
<dbReference type="GO" id="GO:0006508">
    <property type="term" value="P:proteolysis"/>
    <property type="evidence" value="ECO:0007669"/>
    <property type="project" value="UniProtKB-KW"/>
</dbReference>
<dbReference type="FunFam" id="3.40.50.1460:FF:000029">
    <property type="entry name" value="Death related ced-3/Nedd2-like protein"/>
    <property type="match status" value="1"/>
</dbReference>
<dbReference type="Gene3D" id="3.40.50.1460">
    <property type="match status" value="1"/>
</dbReference>
<dbReference type="InterPro" id="IPR029030">
    <property type="entry name" value="Caspase-like_dom_sf"/>
</dbReference>
<dbReference type="InterPro" id="IPR052039">
    <property type="entry name" value="Caspase-related_regulators"/>
</dbReference>
<dbReference type="InterPro" id="IPR056260">
    <property type="entry name" value="Dredd_2nd"/>
</dbReference>
<dbReference type="InterPro" id="IPR056259">
    <property type="entry name" value="Dredd_N"/>
</dbReference>
<dbReference type="InterPro" id="IPR011600">
    <property type="entry name" value="Pept_C14_caspase"/>
</dbReference>
<dbReference type="InterPro" id="IPR002138">
    <property type="entry name" value="Pept_C14_p10"/>
</dbReference>
<dbReference type="InterPro" id="IPR001309">
    <property type="entry name" value="Pept_C14_p20"/>
</dbReference>
<dbReference type="InterPro" id="IPR015917">
    <property type="entry name" value="Pept_C14A"/>
</dbReference>
<dbReference type="PANTHER" id="PTHR22576:SF41">
    <property type="entry name" value="CASPASE 14, APOPTOSIS-RELATED CYSTEINE PEPTIDASE"/>
    <property type="match status" value="1"/>
</dbReference>
<dbReference type="PANTHER" id="PTHR22576">
    <property type="entry name" value="MUCOSA ASSOCIATED LYMPHOID TISSUE LYMPHOMA TRANSLOCATION PROTEIN 1/PARACASPASE"/>
    <property type="match status" value="1"/>
</dbReference>
<dbReference type="Pfam" id="PF23724">
    <property type="entry name" value="Dredd_2nd"/>
    <property type="match status" value="1"/>
</dbReference>
<dbReference type="Pfam" id="PF23725">
    <property type="entry name" value="Dredd_N"/>
    <property type="match status" value="1"/>
</dbReference>
<dbReference type="Pfam" id="PF00656">
    <property type="entry name" value="Peptidase_C14"/>
    <property type="match status" value="1"/>
</dbReference>
<dbReference type="PRINTS" id="PR00376">
    <property type="entry name" value="IL1BCENZYME"/>
</dbReference>
<dbReference type="SMART" id="SM00115">
    <property type="entry name" value="CASc"/>
    <property type="match status" value="1"/>
</dbReference>
<dbReference type="SUPFAM" id="SSF52129">
    <property type="entry name" value="Caspase-like"/>
    <property type="match status" value="1"/>
</dbReference>
<dbReference type="PROSITE" id="PS50207">
    <property type="entry name" value="CASPASE_P10"/>
    <property type="match status" value="1"/>
</dbReference>
<dbReference type="PROSITE" id="PS50208">
    <property type="entry name" value="CASPASE_P20"/>
    <property type="match status" value="1"/>
</dbReference>
<sequence length="511" mass="57576">MSGHNILTQLESIDVLDLPYVERDLNFAQLVSLSFLLYGDEHSTATYILQKLLVLARATASDWPHSDILSQYAKSKPQTWRKYLVEALCIIGARQVLRKLGLCWQELRMHYLPHVGSIRVHIHPLLKSLYTICEELTLAQRGRMVLDIKEKNSVGDPLRFYDAEYLEIFLLDWLTRRLIRLGDFNANGSDVQLLIEYFKFNDLHAQATLLVDTVNAYATSSCSPATPNVLLPMDGNGIANESSSPTAAASRPRAKNALQLSRENAGIALIINQQEFYRDANDDYKVYLPPIELPLRNGTDMDKQRLTNVFSMLGYKVEAHDNLDHLSMLHHIRQACKRSLLHESLVVCILSHGFEDAVYGANSVALRISDIENVLCSYENLYEKPKLVVIQACQQEDKENNALPYKINASTKSPCQYLNMLRAMSTVPGFPALRHTQTGSWFIQSLCDAIVEHSNSDHIADILTIVINNVANKRGNKNETMVPWTGGALRQHVYFPRTSATDKVVPDSPGL</sequence>
<gene>
    <name evidence="3" type="primary">Dredd</name>
    <name type="ORF">GA20387</name>
</gene>
<feature type="propeptide" id="PRO_0000271414" evidence="3">
    <location>
        <begin position="1"/>
        <end position="242"/>
    </location>
</feature>
<feature type="chain" id="PRO_0000271415" description="Caspase-8 subunit p15" evidence="4">
    <location>
        <begin position="243"/>
        <end position="405"/>
    </location>
</feature>
<feature type="propeptide" id="PRO_0000271416" evidence="3">
    <location>
        <begin position="406"/>
        <end position="415"/>
    </location>
</feature>
<feature type="chain" id="PRO_0000271417" description="Caspase-8 subunit p10" evidence="4">
    <location>
        <begin position="416"/>
        <end position="511"/>
    </location>
</feature>
<feature type="active site" evidence="2">
    <location>
        <position position="352"/>
    </location>
</feature>
<feature type="active site" evidence="2">
    <location>
        <position position="393"/>
    </location>
</feature>
<protein>
    <recommendedName>
        <fullName>Caspase-8</fullName>
        <ecNumber>3.4.22.61</ecNumber>
    </recommendedName>
    <alternativeName>
        <fullName>Death-related ced-3/NEDD2-like protein</fullName>
    </alternativeName>
    <component>
        <recommendedName>
            <fullName>Caspase-8 subunit p15</fullName>
        </recommendedName>
    </component>
    <component>
        <recommendedName>
            <fullName>Caspase-8 subunit p10</fullName>
        </recommendedName>
    </component>
</protein>
<accession>Q29IM7</accession>
<evidence type="ECO:0000250" key="1"/>
<evidence type="ECO:0000250" key="2">
    <source>
        <dbReference type="UniProtKB" id="Q14790"/>
    </source>
</evidence>
<evidence type="ECO:0000250" key="3">
    <source>
        <dbReference type="UniProtKB" id="Q8IRY7"/>
    </source>
</evidence>
<evidence type="ECO:0000255" key="4"/>
<evidence type="ECO:0000305" key="5"/>
<evidence type="ECO:0000312" key="6">
    <source>
        <dbReference type="EMBL" id="EAL32626.1"/>
    </source>
</evidence>
<keyword id="KW-0053">Apoptosis</keyword>
<keyword id="KW-0963">Cytoplasm</keyword>
<keyword id="KW-0378">Hydrolase</keyword>
<keyword id="KW-0391">Immunity</keyword>
<keyword id="KW-0399">Innate immunity</keyword>
<keyword id="KW-0645">Protease</keyword>
<keyword id="KW-1185">Reference proteome</keyword>
<keyword id="KW-0788">Thiol protease</keyword>
<keyword id="KW-0865">Zymogen</keyword>
<proteinExistence type="inferred from homology"/>
<name>CASP8_DROPS</name>
<comment type="function">
    <text evidence="3">Effector of the programmed cell death (PCD) activators rpr, grim and W. May play an apoptotic role in the germline as well as soma. Role in immune response, required to resist Gram-negative bacterial infections by regulating DptA. Fadd interacts with Dredd, Fadd promotes cleavage of Dredd and is necessary and sufficient for enhancing Dredd-induced apoptosis.</text>
</comment>
<comment type="catalytic activity">
    <reaction>
        <text>Strict requirement for Asp at position P1 and has a preferred cleavage sequence of (Leu/Asp/Val)-Glu-Thr-Asp-|-(Gly/Ser/Ala).</text>
        <dbReference type="EC" id="3.4.22.61"/>
    </reaction>
</comment>
<comment type="subunit">
    <text evidence="1">Heterotetramer that consists of two anti-parallel arranged heterodimers, each one formed by a 15 kDa (caspase-8 subunit p15) and a 10 kDa (caspase-8 subunit p10) subunit. Interacts with the N-terminus of Fadd (By similarity).</text>
</comment>
<comment type="subcellular location">
    <subcellularLocation>
        <location evidence="2">Cytoplasm</location>
    </subcellularLocation>
</comment>
<comment type="similarity">
    <text evidence="5">Belongs to the peptidase C14A family.</text>
</comment>
<comment type="sequence caution" evidence="5">
    <conflict type="erroneous gene model prediction">
        <sequence resource="EMBL-CDS" id="EAL32626"/>
    </conflict>
</comment>
<organism>
    <name type="scientific">Drosophila pseudoobscura pseudoobscura</name>
    <name type="common">Fruit fly</name>
    <dbReference type="NCBI Taxonomy" id="46245"/>
    <lineage>
        <taxon>Eukaryota</taxon>
        <taxon>Metazoa</taxon>
        <taxon>Ecdysozoa</taxon>
        <taxon>Arthropoda</taxon>
        <taxon>Hexapoda</taxon>
        <taxon>Insecta</taxon>
        <taxon>Pterygota</taxon>
        <taxon>Neoptera</taxon>
        <taxon>Endopterygota</taxon>
        <taxon>Diptera</taxon>
        <taxon>Brachycera</taxon>
        <taxon>Muscomorpha</taxon>
        <taxon>Ephydroidea</taxon>
        <taxon>Drosophilidae</taxon>
        <taxon>Drosophila</taxon>
        <taxon>Sophophora</taxon>
    </lineage>
</organism>